<comment type="function">
    <text evidence="1">Converts 2C-methyl-D-erythritol 2,4-cyclodiphosphate (ME-2,4cPP) into 1-hydroxy-2-methyl-2-(E)-butenyl 4-diphosphate.</text>
</comment>
<comment type="catalytic activity">
    <reaction evidence="1">
        <text>(2E)-4-hydroxy-3-methylbut-2-enyl diphosphate + oxidized [flavodoxin] + H2O + 2 H(+) = 2-C-methyl-D-erythritol 2,4-cyclic diphosphate + reduced [flavodoxin]</text>
        <dbReference type="Rhea" id="RHEA:43604"/>
        <dbReference type="Rhea" id="RHEA-COMP:10622"/>
        <dbReference type="Rhea" id="RHEA-COMP:10623"/>
        <dbReference type="ChEBI" id="CHEBI:15377"/>
        <dbReference type="ChEBI" id="CHEBI:15378"/>
        <dbReference type="ChEBI" id="CHEBI:57618"/>
        <dbReference type="ChEBI" id="CHEBI:58210"/>
        <dbReference type="ChEBI" id="CHEBI:58483"/>
        <dbReference type="ChEBI" id="CHEBI:128753"/>
        <dbReference type="EC" id="1.17.7.3"/>
    </reaction>
</comment>
<comment type="cofactor">
    <cofactor evidence="1">
        <name>[4Fe-4S] cluster</name>
        <dbReference type="ChEBI" id="CHEBI:49883"/>
    </cofactor>
    <text evidence="1">Binds 1 [4Fe-4S] cluster.</text>
</comment>
<comment type="pathway">
    <text evidence="1">Isoprenoid biosynthesis; isopentenyl diphosphate biosynthesis via DXP pathway; isopentenyl diphosphate from 1-deoxy-D-xylulose 5-phosphate: step 5/6.</text>
</comment>
<comment type="similarity">
    <text evidence="1">Belongs to the IspG family.</text>
</comment>
<evidence type="ECO:0000255" key="1">
    <source>
        <dbReference type="HAMAP-Rule" id="MF_00159"/>
    </source>
</evidence>
<proteinExistence type="inferred from homology"/>
<protein>
    <recommendedName>
        <fullName evidence="1">4-hydroxy-3-methylbut-2-en-1-yl diphosphate synthase (flavodoxin)</fullName>
        <ecNumber evidence="1">1.17.7.3</ecNumber>
    </recommendedName>
    <alternativeName>
        <fullName evidence="1">1-hydroxy-2-methyl-2-(E)-butenyl 4-diphosphate synthase</fullName>
    </alternativeName>
</protein>
<dbReference type="EC" id="1.17.7.3" evidence="1"/>
<dbReference type="EMBL" id="AE015928">
    <property type="protein sequence ID" value="AAO77624.1"/>
    <property type="molecule type" value="Genomic_DNA"/>
</dbReference>
<dbReference type="RefSeq" id="NP_811430.1">
    <property type="nucleotide sequence ID" value="NC_004663.1"/>
</dbReference>
<dbReference type="RefSeq" id="WP_011108331.1">
    <property type="nucleotide sequence ID" value="NC_004663.1"/>
</dbReference>
<dbReference type="SMR" id="Q8A4T0"/>
<dbReference type="STRING" id="226186.BT_2517"/>
<dbReference type="PaxDb" id="226186-BT_2517"/>
<dbReference type="EnsemblBacteria" id="AAO77624">
    <property type="protein sequence ID" value="AAO77624"/>
    <property type="gene ID" value="BT_2517"/>
</dbReference>
<dbReference type="GeneID" id="60923689"/>
<dbReference type="KEGG" id="bth:BT_2517"/>
<dbReference type="PATRIC" id="fig|226186.12.peg.2569"/>
<dbReference type="eggNOG" id="COG0821">
    <property type="taxonomic scope" value="Bacteria"/>
</dbReference>
<dbReference type="HOGENOM" id="CLU_012689_0_0_10"/>
<dbReference type="InParanoid" id="Q8A4T0"/>
<dbReference type="OrthoDB" id="9803214at2"/>
<dbReference type="UniPathway" id="UPA00056">
    <property type="reaction ID" value="UER00096"/>
</dbReference>
<dbReference type="Proteomes" id="UP000001414">
    <property type="component" value="Chromosome"/>
</dbReference>
<dbReference type="GO" id="GO:0051539">
    <property type="term" value="F:4 iron, 4 sulfur cluster binding"/>
    <property type="evidence" value="ECO:0007669"/>
    <property type="project" value="UniProtKB-UniRule"/>
</dbReference>
<dbReference type="GO" id="GO:0046429">
    <property type="term" value="F:4-hydroxy-3-methylbut-2-en-1-yl diphosphate synthase activity (ferredoxin)"/>
    <property type="evidence" value="ECO:0000318"/>
    <property type="project" value="GO_Central"/>
</dbReference>
<dbReference type="GO" id="GO:0141197">
    <property type="term" value="F:4-hydroxy-3-methylbut-2-enyl-diphosphate synthase activity (flavodoxin)"/>
    <property type="evidence" value="ECO:0007669"/>
    <property type="project" value="UniProtKB-EC"/>
</dbReference>
<dbReference type="GO" id="GO:0005506">
    <property type="term" value="F:iron ion binding"/>
    <property type="evidence" value="ECO:0007669"/>
    <property type="project" value="InterPro"/>
</dbReference>
<dbReference type="GO" id="GO:0019288">
    <property type="term" value="P:isopentenyl diphosphate biosynthetic process, methylerythritol 4-phosphate pathway"/>
    <property type="evidence" value="ECO:0000318"/>
    <property type="project" value="GO_Central"/>
</dbReference>
<dbReference type="GO" id="GO:0016114">
    <property type="term" value="P:terpenoid biosynthetic process"/>
    <property type="evidence" value="ECO:0007669"/>
    <property type="project" value="InterPro"/>
</dbReference>
<dbReference type="FunFam" id="3.20.20.20:FF:000005">
    <property type="entry name" value="4-hydroxy-3-methylbut-2-en-1-yl diphosphate synthase (flavodoxin)"/>
    <property type="match status" value="1"/>
</dbReference>
<dbReference type="FunFam" id="3.30.413.10:FF:000006">
    <property type="entry name" value="4-hydroxy-3-methylbut-2-en-1-yl diphosphate synthase (flavodoxin)"/>
    <property type="match status" value="1"/>
</dbReference>
<dbReference type="Gene3D" id="3.20.20.20">
    <property type="entry name" value="Dihydropteroate synthase-like"/>
    <property type="match status" value="1"/>
</dbReference>
<dbReference type="Gene3D" id="3.30.413.10">
    <property type="entry name" value="Sulfite Reductase Hemoprotein, domain 1"/>
    <property type="match status" value="1"/>
</dbReference>
<dbReference type="HAMAP" id="MF_00159">
    <property type="entry name" value="IspG"/>
    <property type="match status" value="1"/>
</dbReference>
<dbReference type="InterPro" id="IPR011005">
    <property type="entry name" value="Dihydropteroate_synth-like_sf"/>
</dbReference>
<dbReference type="InterPro" id="IPR017178">
    <property type="entry name" value="IspG_atypical"/>
</dbReference>
<dbReference type="InterPro" id="IPR004588">
    <property type="entry name" value="IspG_bac-typ"/>
</dbReference>
<dbReference type="InterPro" id="IPR045854">
    <property type="entry name" value="NO2/SO3_Rdtase_4Fe4S_sf"/>
</dbReference>
<dbReference type="NCBIfam" id="TIGR00612">
    <property type="entry name" value="ispG_gcpE"/>
    <property type="match status" value="1"/>
</dbReference>
<dbReference type="NCBIfam" id="NF002534">
    <property type="entry name" value="PRK02048.1"/>
    <property type="match status" value="1"/>
</dbReference>
<dbReference type="PANTHER" id="PTHR30454">
    <property type="entry name" value="4-HYDROXY-3-METHYLBUT-2-EN-1-YL DIPHOSPHATE SYNTHASE"/>
    <property type="match status" value="1"/>
</dbReference>
<dbReference type="PANTHER" id="PTHR30454:SF0">
    <property type="entry name" value="4-HYDROXY-3-METHYLBUT-2-EN-1-YL DIPHOSPHATE SYNTHASE (FERREDOXIN), CHLOROPLASTIC"/>
    <property type="match status" value="1"/>
</dbReference>
<dbReference type="Pfam" id="PF04551">
    <property type="entry name" value="GcpE"/>
    <property type="match status" value="2"/>
</dbReference>
<dbReference type="PIRSF" id="PIRSF037336">
    <property type="entry name" value="IspG_like"/>
    <property type="match status" value="1"/>
</dbReference>
<dbReference type="SUPFAM" id="SSF56014">
    <property type="entry name" value="Nitrite and sulphite reductase 4Fe-4S domain-like"/>
    <property type="match status" value="1"/>
</dbReference>
<gene>
    <name evidence="1" type="primary">ispG</name>
    <name type="ordered locus">BT_2517</name>
</gene>
<feature type="chain" id="PRO_0000190538" description="4-hydroxy-3-methylbut-2-en-1-yl diphosphate synthase (flavodoxin)">
    <location>
        <begin position="1"/>
        <end position="613"/>
    </location>
</feature>
<feature type="binding site" evidence="1">
    <location>
        <position position="521"/>
    </location>
    <ligand>
        <name>[4Fe-4S] cluster</name>
        <dbReference type="ChEBI" id="CHEBI:49883"/>
    </ligand>
</feature>
<feature type="binding site" evidence="1">
    <location>
        <position position="524"/>
    </location>
    <ligand>
        <name>[4Fe-4S] cluster</name>
        <dbReference type="ChEBI" id="CHEBI:49883"/>
    </ligand>
</feature>
<feature type="binding site" evidence="1">
    <location>
        <position position="555"/>
    </location>
    <ligand>
        <name>[4Fe-4S] cluster</name>
        <dbReference type="ChEBI" id="CHEBI:49883"/>
    </ligand>
</feature>
<feature type="binding site" evidence="1">
    <location>
        <position position="562"/>
    </location>
    <ligand>
        <name>[4Fe-4S] cluster</name>
        <dbReference type="ChEBI" id="CHEBI:49883"/>
    </ligand>
</feature>
<keyword id="KW-0004">4Fe-4S</keyword>
<keyword id="KW-0408">Iron</keyword>
<keyword id="KW-0411">Iron-sulfur</keyword>
<keyword id="KW-0414">Isoprene biosynthesis</keyword>
<keyword id="KW-0479">Metal-binding</keyword>
<keyword id="KW-0560">Oxidoreductase</keyword>
<keyword id="KW-1185">Reference proteome</keyword>
<name>ISPG_BACTN</name>
<sequence length="613" mass="67897">MDLFNYFRRETSEVNIGAVPLGGPNPIRIQSMTNTSTMDTEACVEQAKRIVDAGGEYVRLTTQGVKEAENLMNINIGLRSQGYMVPLVADVHFNPKVADVAAQYAEKVRINPGNYVDAARTFKKLEYTDEEYAQEIQKIHDRFVPFLNICKENHTAIRIGVNHGSLSDRIMSRYGDTPEGMVESCMEFLRICVAEHFTDVVISIKASNTVVMVKTVRLLVAVMEQEGMSFPLHLGVTEAGDGEDGRIKSALGIGALLCDGLGDTIRVSLSEAPEAEIPVARKLVDYVLLRQDHPYIPGMEAPEFNYLSPSRRKTRAVRNIGGEHLPVVIADRMDGKTEVNPQFTPDYIYAGRTLPEQREEGVEYILDADVWEGEAGTWPAFNHAQLPLMGECSAELKFLFMPYMAQTDEVIACLKVHPEVVVISQSNHPNRLGEHRALVHQLMTEGLENPVVFFQHYAEDEAEDLQIKSAVDMGALIFDGLCDGIFLFNQGSLSHAVVDATAFGILQAGRTRTSKTEYISCPGCGRTLYDLEKTIARIKAATSHLKGLKIGIMGCIVNGPGEMADADYGYVGAGRGKISLYKGKVCVEKNIPEEEAVERLLEFIRNDRKELEL</sequence>
<reference key="1">
    <citation type="journal article" date="2003" name="Science">
        <title>A genomic view of the human-Bacteroides thetaiotaomicron symbiosis.</title>
        <authorList>
            <person name="Xu J."/>
            <person name="Bjursell M.K."/>
            <person name="Himrod J."/>
            <person name="Deng S."/>
            <person name="Carmichael L.K."/>
            <person name="Chiang H.C."/>
            <person name="Hooper L.V."/>
            <person name="Gordon J.I."/>
        </authorList>
    </citation>
    <scope>NUCLEOTIDE SEQUENCE [LARGE SCALE GENOMIC DNA]</scope>
    <source>
        <strain>ATCC 29148 / DSM 2079 / JCM 5827 / CCUG 10774 / NCTC 10582 / VPI-5482 / E50</strain>
    </source>
</reference>
<accession>Q8A4T0</accession>
<organism>
    <name type="scientific">Bacteroides thetaiotaomicron (strain ATCC 29148 / DSM 2079 / JCM 5827 / CCUG 10774 / NCTC 10582 / VPI-5482 / E50)</name>
    <dbReference type="NCBI Taxonomy" id="226186"/>
    <lineage>
        <taxon>Bacteria</taxon>
        <taxon>Pseudomonadati</taxon>
        <taxon>Bacteroidota</taxon>
        <taxon>Bacteroidia</taxon>
        <taxon>Bacteroidales</taxon>
        <taxon>Bacteroidaceae</taxon>
        <taxon>Bacteroides</taxon>
    </lineage>
</organism>